<proteinExistence type="inferred from homology"/>
<keyword id="KW-0560">Oxidoreductase</keyword>
<keyword id="KW-1185">Reference proteome</keyword>
<name>GCSPA_AERPE</name>
<reference key="1">
    <citation type="journal article" date="1999" name="DNA Res.">
        <title>Complete genome sequence of an aerobic hyper-thermophilic crenarchaeon, Aeropyrum pernix K1.</title>
        <authorList>
            <person name="Kawarabayasi Y."/>
            <person name="Hino Y."/>
            <person name="Horikawa H."/>
            <person name="Yamazaki S."/>
            <person name="Haikawa Y."/>
            <person name="Jin-no K."/>
            <person name="Takahashi M."/>
            <person name="Sekine M."/>
            <person name="Baba S."/>
            <person name="Ankai A."/>
            <person name="Kosugi H."/>
            <person name="Hosoyama A."/>
            <person name="Fukui S."/>
            <person name="Nagai Y."/>
            <person name="Nishijima K."/>
            <person name="Nakazawa H."/>
            <person name="Takamiya M."/>
            <person name="Masuda S."/>
            <person name="Funahashi T."/>
            <person name="Tanaka T."/>
            <person name="Kudoh Y."/>
            <person name="Yamazaki J."/>
            <person name="Kushida N."/>
            <person name="Oguchi A."/>
            <person name="Aoki K."/>
            <person name="Kubota K."/>
            <person name="Nakamura Y."/>
            <person name="Nomura N."/>
            <person name="Sako Y."/>
            <person name="Kikuchi H."/>
        </authorList>
    </citation>
    <scope>NUCLEOTIDE SEQUENCE [LARGE SCALE GENOMIC DNA]</scope>
    <source>
        <strain>ATCC 700893 / DSM 11879 / JCM 9820 / NBRC 100138 / K1</strain>
    </source>
</reference>
<protein>
    <recommendedName>
        <fullName evidence="1">Probable glycine dehydrogenase (decarboxylating) subunit 1</fullName>
        <ecNumber evidence="1">1.4.4.2</ecNumber>
    </recommendedName>
    <alternativeName>
        <fullName evidence="1">Glycine cleavage system P-protein subunit 1</fullName>
    </alternativeName>
    <alternativeName>
        <fullName evidence="1">Glycine decarboxylase subunit 1</fullName>
    </alternativeName>
    <alternativeName>
        <fullName evidence="1">Glycine dehydrogenase (aminomethyl-transferring) subunit 1</fullName>
    </alternativeName>
</protein>
<organism>
    <name type="scientific">Aeropyrum pernix (strain ATCC 700893 / DSM 11879 / JCM 9820 / NBRC 100138 / K1)</name>
    <dbReference type="NCBI Taxonomy" id="272557"/>
    <lineage>
        <taxon>Archaea</taxon>
        <taxon>Thermoproteota</taxon>
        <taxon>Thermoprotei</taxon>
        <taxon>Desulfurococcales</taxon>
        <taxon>Desulfurococcaceae</taxon>
        <taxon>Aeropyrum</taxon>
    </lineage>
</organism>
<accession>Q9YA15</accession>
<comment type="function">
    <text evidence="1">The glycine cleavage system catalyzes the degradation of glycine. The P protein binds the alpha-amino group of glycine through its pyridoxal phosphate cofactor; CO(2) is released and the remaining methylamine moiety is then transferred to the lipoamide cofactor of the H protein.</text>
</comment>
<comment type="catalytic activity">
    <reaction evidence="1">
        <text>N(6)-[(R)-lipoyl]-L-lysyl-[glycine-cleavage complex H protein] + glycine + H(+) = N(6)-[(R)-S(8)-aminomethyldihydrolipoyl]-L-lysyl-[glycine-cleavage complex H protein] + CO2</text>
        <dbReference type="Rhea" id="RHEA:24304"/>
        <dbReference type="Rhea" id="RHEA-COMP:10494"/>
        <dbReference type="Rhea" id="RHEA-COMP:10495"/>
        <dbReference type="ChEBI" id="CHEBI:15378"/>
        <dbReference type="ChEBI" id="CHEBI:16526"/>
        <dbReference type="ChEBI" id="CHEBI:57305"/>
        <dbReference type="ChEBI" id="CHEBI:83099"/>
        <dbReference type="ChEBI" id="CHEBI:83143"/>
        <dbReference type="EC" id="1.4.4.2"/>
    </reaction>
</comment>
<comment type="subunit">
    <text evidence="1">The glycine cleavage system is composed of four proteins: P, T, L and H. In this organism, the P 'protein' is a heterodimer of two subunits.</text>
</comment>
<comment type="similarity">
    <text evidence="1">Belongs to the GcvP family. N-terminal subunit subfamily.</text>
</comment>
<dbReference type="EC" id="1.4.4.2" evidence="1"/>
<dbReference type="EMBL" id="BA000002">
    <property type="protein sequence ID" value="BAA81135.2"/>
    <property type="molecule type" value="Genomic_DNA"/>
</dbReference>
<dbReference type="PIR" id="G72518">
    <property type="entry name" value="G72518"/>
</dbReference>
<dbReference type="SMR" id="Q9YA15"/>
<dbReference type="STRING" id="272557.APE_2124.1"/>
<dbReference type="EnsemblBacteria" id="BAA81135">
    <property type="protein sequence ID" value="BAA81135"/>
    <property type="gene ID" value="APE_2124.1"/>
</dbReference>
<dbReference type="KEGG" id="ape:APE_2124.1"/>
<dbReference type="PATRIC" id="fig|272557.25.peg.1413"/>
<dbReference type="eggNOG" id="arCOG00077">
    <property type="taxonomic scope" value="Archaea"/>
</dbReference>
<dbReference type="Proteomes" id="UP000002518">
    <property type="component" value="Chromosome"/>
</dbReference>
<dbReference type="GO" id="GO:0004375">
    <property type="term" value="F:glycine dehydrogenase (decarboxylating) activity"/>
    <property type="evidence" value="ECO:0007669"/>
    <property type="project" value="UniProtKB-EC"/>
</dbReference>
<dbReference type="GO" id="GO:0019464">
    <property type="term" value="P:glycine decarboxylation via glycine cleavage system"/>
    <property type="evidence" value="ECO:0007669"/>
    <property type="project" value="UniProtKB-UniRule"/>
</dbReference>
<dbReference type="GO" id="GO:0009116">
    <property type="term" value="P:nucleoside metabolic process"/>
    <property type="evidence" value="ECO:0007669"/>
    <property type="project" value="InterPro"/>
</dbReference>
<dbReference type="CDD" id="cd00613">
    <property type="entry name" value="GDC-P"/>
    <property type="match status" value="1"/>
</dbReference>
<dbReference type="Gene3D" id="3.90.1150.10">
    <property type="entry name" value="Aspartate Aminotransferase, domain 1"/>
    <property type="match status" value="1"/>
</dbReference>
<dbReference type="Gene3D" id="3.40.640.10">
    <property type="entry name" value="Type I PLP-dependent aspartate aminotransferase-like (Major domain)"/>
    <property type="match status" value="1"/>
</dbReference>
<dbReference type="HAMAP" id="MF_00712">
    <property type="entry name" value="GcvPA"/>
    <property type="match status" value="1"/>
</dbReference>
<dbReference type="InterPro" id="IPR023010">
    <property type="entry name" value="GcvPA"/>
</dbReference>
<dbReference type="InterPro" id="IPR049315">
    <property type="entry name" value="GDC-P_N"/>
</dbReference>
<dbReference type="InterPro" id="IPR020581">
    <property type="entry name" value="GDC_P"/>
</dbReference>
<dbReference type="InterPro" id="IPR015424">
    <property type="entry name" value="PyrdxlP-dep_Trfase"/>
</dbReference>
<dbReference type="InterPro" id="IPR015421">
    <property type="entry name" value="PyrdxlP-dep_Trfase_major"/>
</dbReference>
<dbReference type="InterPro" id="IPR015422">
    <property type="entry name" value="PyrdxlP-dep_Trfase_small"/>
</dbReference>
<dbReference type="NCBIfam" id="NF001696">
    <property type="entry name" value="PRK00451.1"/>
    <property type="match status" value="1"/>
</dbReference>
<dbReference type="PANTHER" id="PTHR42806">
    <property type="entry name" value="GLYCINE CLEAVAGE SYSTEM P-PROTEIN"/>
    <property type="match status" value="1"/>
</dbReference>
<dbReference type="PANTHER" id="PTHR42806:SF1">
    <property type="entry name" value="GLYCINE DEHYDROGENASE (DECARBOXYLATING)"/>
    <property type="match status" value="1"/>
</dbReference>
<dbReference type="Pfam" id="PF02347">
    <property type="entry name" value="GDC-P"/>
    <property type="match status" value="1"/>
</dbReference>
<dbReference type="PIRSF" id="PIRSF006815">
    <property type="entry name" value="GcvPA"/>
    <property type="match status" value="1"/>
</dbReference>
<dbReference type="SUPFAM" id="SSF53383">
    <property type="entry name" value="PLP-dependent transferases"/>
    <property type="match status" value="1"/>
</dbReference>
<feature type="chain" id="PRO_0000166982" description="Probable glycine dehydrogenase (decarboxylating) subunit 1">
    <location>
        <begin position="1"/>
        <end position="465"/>
    </location>
</feature>
<evidence type="ECO:0000255" key="1">
    <source>
        <dbReference type="HAMAP-Rule" id="MF_00712"/>
    </source>
</evidence>
<gene>
    <name evidence="1" type="primary">gcvPA</name>
    <name type="ordered locus">APE_2124.1</name>
</gene>
<sequence length="465" mass="51103">MEHPWIPNSHKAILDEMLEAIGVSSVDDLYRDIPPTILLSPEEWDSLPIGEGRPLSEAEVLARINDILSRNKYFTDPPPFVGGGVWPRYVPSVVKALITRGEFLTAYTPYQAEISQGLMQALFEYQSLVAELLEMEVVNASLYDWSSAVGEAMLMARRVTRRNRVLVPETMNPLHLETATTYAYGGGIRVEKVRVDRETGFIDLEDLESRLSQGDTAALYMEYPSSYTGVIDENVEAAGEAVHKAGGLFILGVEPVSMAILKPPGRLGADIAVGDGQPLGLGLNYGGPYLGVFAVRWDGRLVRQMPGRLIGMTVDAEGRRAFAMILQTREQHIRRAKATSNITTNEALMAIAAAVYLSLLGPQGLREVAEASWYMSHYAAKRLSELRGVEAPLLEGEFIMDFTVRLPMDAGVARRRLLEKGVLAGIPLGGFSFFSDNDMLLTVTEAHTRRHVDLLVNLLDSVLGG</sequence>